<evidence type="ECO:0000255" key="1">
    <source>
        <dbReference type="HAMAP-Rule" id="MF_00414"/>
    </source>
</evidence>
<comment type="function">
    <text evidence="1">Is probably a protein kinase regulator of UbiI activity which is involved in aerobic coenzyme Q (ubiquinone) biosynthesis.</text>
</comment>
<comment type="pathway">
    <text>Cofactor biosynthesis; ubiquinone biosynthesis [regulation].</text>
</comment>
<comment type="subcellular location">
    <subcellularLocation>
        <location evidence="1">Cell inner membrane</location>
        <topology evidence="1">Multi-pass membrane protein</topology>
    </subcellularLocation>
</comment>
<comment type="similarity">
    <text evidence="1">Belongs to the ABC1 family. UbiB subfamily.</text>
</comment>
<dbReference type="EC" id="2.7.-.-" evidence="1"/>
<dbReference type="EMBL" id="AE003852">
    <property type="protein sequence ID" value="AAF93263.1"/>
    <property type="molecule type" value="Genomic_DNA"/>
</dbReference>
<dbReference type="PIR" id="F82366">
    <property type="entry name" value="F82366"/>
</dbReference>
<dbReference type="RefSeq" id="NP_229744.1">
    <property type="nucleotide sequence ID" value="NC_002505.1"/>
</dbReference>
<dbReference type="RefSeq" id="WP_000801143.1">
    <property type="nucleotide sequence ID" value="NZ_LT906614.1"/>
</dbReference>
<dbReference type="SMR" id="Q9KVQ4"/>
<dbReference type="STRING" id="243277.VC_0085"/>
<dbReference type="DNASU" id="2614859"/>
<dbReference type="EnsemblBacteria" id="AAF93263">
    <property type="protein sequence ID" value="AAF93263"/>
    <property type="gene ID" value="VC_0085"/>
</dbReference>
<dbReference type="GeneID" id="89513180"/>
<dbReference type="KEGG" id="vch:VC_0085"/>
<dbReference type="PATRIC" id="fig|243277.26.peg.82"/>
<dbReference type="eggNOG" id="COG0661">
    <property type="taxonomic scope" value="Bacteria"/>
</dbReference>
<dbReference type="HOGENOM" id="CLU_006533_0_0_6"/>
<dbReference type="UniPathway" id="UPA00232"/>
<dbReference type="Proteomes" id="UP000000584">
    <property type="component" value="Chromosome 1"/>
</dbReference>
<dbReference type="GO" id="GO:0005886">
    <property type="term" value="C:plasma membrane"/>
    <property type="evidence" value="ECO:0007669"/>
    <property type="project" value="UniProtKB-SubCell"/>
</dbReference>
<dbReference type="GO" id="GO:0005524">
    <property type="term" value="F:ATP binding"/>
    <property type="evidence" value="ECO:0007669"/>
    <property type="project" value="UniProtKB-KW"/>
</dbReference>
<dbReference type="GO" id="GO:0004672">
    <property type="term" value="F:protein kinase activity"/>
    <property type="evidence" value="ECO:0007669"/>
    <property type="project" value="UniProtKB-UniRule"/>
</dbReference>
<dbReference type="GO" id="GO:0010795">
    <property type="term" value="P:regulation of ubiquinone biosynthetic process"/>
    <property type="evidence" value="ECO:0007669"/>
    <property type="project" value="UniProtKB-UniRule"/>
</dbReference>
<dbReference type="GO" id="GO:0006744">
    <property type="term" value="P:ubiquinone biosynthetic process"/>
    <property type="evidence" value="ECO:0007669"/>
    <property type="project" value="UniProtKB-UniPathway"/>
</dbReference>
<dbReference type="CDD" id="cd13972">
    <property type="entry name" value="UbiB"/>
    <property type="match status" value="1"/>
</dbReference>
<dbReference type="HAMAP" id="MF_00414">
    <property type="entry name" value="UbiB"/>
    <property type="match status" value="1"/>
</dbReference>
<dbReference type="InterPro" id="IPR004147">
    <property type="entry name" value="ABC1_dom"/>
</dbReference>
<dbReference type="InterPro" id="IPR011009">
    <property type="entry name" value="Kinase-like_dom_sf"/>
</dbReference>
<dbReference type="InterPro" id="IPR010232">
    <property type="entry name" value="UbiB"/>
</dbReference>
<dbReference type="InterPro" id="IPR045308">
    <property type="entry name" value="UbiB_bact"/>
</dbReference>
<dbReference type="InterPro" id="IPR050154">
    <property type="entry name" value="UbiB_kinase"/>
</dbReference>
<dbReference type="NCBIfam" id="NF003404">
    <property type="entry name" value="PRK04750.1"/>
    <property type="match status" value="1"/>
</dbReference>
<dbReference type="NCBIfam" id="TIGR01982">
    <property type="entry name" value="UbiB"/>
    <property type="match status" value="1"/>
</dbReference>
<dbReference type="PANTHER" id="PTHR10566">
    <property type="entry name" value="CHAPERONE-ACTIVITY OF BC1 COMPLEX CABC1 -RELATED"/>
    <property type="match status" value="1"/>
</dbReference>
<dbReference type="PANTHER" id="PTHR10566:SF113">
    <property type="entry name" value="PROTEIN ACTIVITY OF BC1 COMPLEX KINASE 7, CHLOROPLASTIC"/>
    <property type="match status" value="1"/>
</dbReference>
<dbReference type="Pfam" id="PF03109">
    <property type="entry name" value="ABC1"/>
    <property type="match status" value="1"/>
</dbReference>
<dbReference type="SUPFAM" id="SSF56112">
    <property type="entry name" value="Protein kinase-like (PK-like)"/>
    <property type="match status" value="1"/>
</dbReference>
<feature type="chain" id="PRO_0000200720" description="Probable protein kinase UbiB">
    <location>
        <begin position="1"/>
        <end position="544"/>
    </location>
</feature>
<feature type="transmembrane region" description="Helical" evidence="1">
    <location>
        <begin position="496"/>
        <end position="516"/>
    </location>
</feature>
<feature type="transmembrane region" description="Helical" evidence="1">
    <location>
        <begin position="519"/>
        <end position="539"/>
    </location>
</feature>
<feature type="domain" description="Protein kinase" evidence="1">
    <location>
        <begin position="123"/>
        <end position="501"/>
    </location>
</feature>
<feature type="active site" description="Proton acceptor" evidence="1">
    <location>
        <position position="287"/>
    </location>
</feature>
<feature type="binding site" evidence="1">
    <location>
        <begin position="129"/>
        <end position="137"/>
    </location>
    <ligand>
        <name>ATP</name>
        <dbReference type="ChEBI" id="CHEBI:30616"/>
    </ligand>
</feature>
<feature type="binding site" evidence="1">
    <location>
        <position position="152"/>
    </location>
    <ligand>
        <name>ATP</name>
        <dbReference type="ChEBI" id="CHEBI:30616"/>
    </ligand>
</feature>
<reference key="1">
    <citation type="journal article" date="2000" name="Nature">
        <title>DNA sequence of both chromosomes of the cholera pathogen Vibrio cholerae.</title>
        <authorList>
            <person name="Heidelberg J.F."/>
            <person name="Eisen J.A."/>
            <person name="Nelson W.C."/>
            <person name="Clayton R.A."/>
            <person name="Gwinn M.L."/>
            <person name="Dodson R.J."/>
            <person name="Haft D.H."/>
            <person name="Hickey E.K."/>
            <person name="Peterson J.D."/>
            <person name="Umayam L.A."/>
            <person name="Gill S.R."/>
            <person name="Nelson K.E."/>
            <person name="Read T.D."/>
            <person name="Tettelin H."/>
            <person name="Richardson D.L."/>
            <person name="Ermolaeva M.D."/>
            <person name="Vamathevan J.J."/>
            <person name="Bass S."/>
            <person name="Qin H."/>
            <person name="Dragoi I."/>
            <person name="Sellers P."/>
            <person name="McDonald L.A."/>
            <person name="Utterback T.R."/>
            <person name="Fleischmann R.D."/>
            <person name="Nierman W.C."/>
            <person name="White O."/>
            <person name="Salzberg S.L."/>
            <person name="Smith H.O."/>
            <person name="Colwell R.R."/>
            <person name="Mekalanos J.J."/>
            <person name="Venter J.C."/>
            <person name="Fraser C.M."/>
        </authorList>
    </citation>
    <scope>NUCLEOTIDE SEQUENCE [LARGE SCALE GENOMIC DNA]</scope>
    <source>
        <strain>ATCC 39315 / El Tor Inaba N16961</strain>
    </source>
</reference>
<keyword id="KW-0067">ATP-binding</keyword>
<keyword id="KW-0997">Cell inner membrane</keyword>
<keyword id="KW-1003">Cell membrane</keyword>
<keyword id="KW-0418">Kinase</keyword>
<keyword id="KW-0472">Membrane</keyword>
<keyword id="KW-0547">Nucleotide-binding</keyword>
<keyword id="KW-1185">Reference proteome</keyword>
<keyword id="KW-0808">Transferase</keyword>
<keyword id="KW-0812">Transmembrane</keyword>
<keyword id="KW-1133">Transmembrane helix</keyword>
<keyword id="KW-0831">Ubiquinone biosynthesis</keyword>
<sequence length="544" mass="62535">MKPAELKRLYRIVKVQLEYGLDELLPEHHLTRAPLLARKSLFWLRNQHADKALGDRLRLALQELGPVWIKFGQMMSTRRDLFPPHIADPLAMLQDKVAPFDGLQAKQLIEEELGAPLETWFDDFDIKPLASASIAQVHTAKLKSNGRDVVLKVIRPDIRPQIDADIKLMYRVARIVAKALPEARRLKPVEVVREYEKTLLDELDLRREAANAIQLRRNFENSEELYVPEVLTDFCNETVMVSERIYGIQVSDLAGLHANGTNMKLLAERGVSVFFTQVFRDSFFHADMHPGNVFVNPNHPENPQWIGLDCGIVGTLNSEDKRYLAENFLAFFNRDYRRVAQLHVDSGWVPLDTNVDEFEVAIRMVCEPIFAKPLCEISFGHVLLNLFNTARRFNMEVQPQLVLLQKTLLYVEGLGRQLYPQLDLWQTAKPFLEKWMANQVGPQAFLHALKERAPLWFEKMPELPELLYDSLKQGRNLNQRLDNLYQGYRQSKRQQGTGKFLFGVGATLVVCSAIWISNQLEPLAIGSATIGVLCWLLSWRAYRQ</sequence>
<gene>
    <name evidence="1" type="primary">ubiB</name>
    <name type="ordered locus">VC_0085</name>
</gene>
<organism>
    <name type="scientific">Vibrio cholerae serotype O1 (strain ATCC 39315 / El Tor Inaba N16961)</name>
    <dbReference type="NCBI Taxonomy" id="243277"/>
    <lineage>
        <taxon>Bacteria</taxon>
        <taxon>Pseudomonadati</taxon>
        <taxon>Pseudomonadota</taxon>
        <taxon>Gammaproteobacteria</taxon>
        <taxon>Vibrionales</taxon>
        <taxon>Vibrionaceae</taxon>
        <taxon>Vibrio</taxon>
    </lineage>
</organism>
<name>UBIB_VIBCH</name>
<protein>
    <recommendedName>
        <fullName evidence="1">Probable protein kinase UbiB</fullName>
        <ecNumber evidence="1">2.7.-.-</ecNumber>
    </recommendedName>
    <alternativeName>
        <fullName evidence="1">Ubiquinone biosynthesis protein UbiB</fullName>
    </alternativeName>
</protein>
<proteinExistence type="inferred from homology"/>
<accession>Q9KVQ4</accession>